<protein>
    <recommendedName>
        <fullName evidence="1">Glucosamine-6-phosphate deaminase</fullName>
        <ecNumber evidence="1">3.5.99.6</ecNumber>
    </recommendedName>
    <alternativeName>
        <fullName evidence="1">GlcN6P deaminase</fullName>
        <shortName evidence="1">GNPDA</shortName>
    </alternativeName>
    <alternativeName>
        <fullName evidence="1">Glucosamine-6-phosphate isomerase</fullName>
    </alternativeName>
</protein>
<name>NAGB_CORGL</name>
<accession>Q8NMD4</accession>
<feature type="chain" id="PRO_0000160142" description="Glucosamine-6-phosphate deaminase">
    <location>
        <begin position="1"/>
        <end position="253"/>
    </location>
</feature>
<feature type="active site" description="Proton acceptor; for enolization step" evidence="1">
    <location>
        <position position="65"/>
    </location>
</feature>
<feature type="active site" description="For ring-opening step" evidence="1">
    <location>
        <position position="133"/>
    </location>
</feature>
<feature type="active site" description="Proton acceptor; for ring-opening step" evidence="1">
    <location>
        <position position="135"/>
    </location>
</feature>
<feature type="active site" description="For ring-opening step" evidence="1">
    <location>
        <position position="140"/>
    </location>
</feature>
<organism>
    <name type="scientific">Corynebacterium glutamicum (strain ATCC 13032 / DSM 20300 / JCM 1318 / BCRC 11384 / CCUG 27702 / LMG 3730 / NBRC 12168 / NCIMB 10025 / NRRL B-2784 / 534)</name>
    <dbReference type="NCBI Taxonomy" id="196627"/>
    <lineage>
        <taxon>Bacteria</taxon>
        <taxon>Bacillati</taxon>
        <taxon>Actinomycetota</taxon>
        <taxon>Actinomycetes</taxon>
        <taxon>Mycobacteriales</taxon>
        <taxon>Corynebacteriaceae</taxon>
        <taxon>Corynebacterium</taxon>
    </lineage>
</organism>
<keyword id="KW-0119">Carbohydrate metabolism</keyword>
<keyword id="KW-0378">Hydrolase</keyword>
<keyword id="KW-1185">Reference proteome</keyword>
<comment type="function">
    <text evidence="1">Catalyzes the reversible isomerization-deamination of glucosamine 6-phosphate (GlcN6P) to form fructose 6-phosphate (Fru6P) and ammonium ion.</text>
</comment>
<comment type="catalytic activity">
    <reaction evidence="1">
        <text>alpha-D-glucosamine 6-phosphate + H2O = beta-D-fructose 6-phosphate + NH4(+)</text>
        <dbReference type="Rhea" id="RHEA:12172"/>
        <dbReference type="ChEBI" id="CHEBI:15377"/>
        <dbReference type="ChEBI" id="CHEBI:28938"/>
        <dbReference type="ChEBI" id="CHEBI:57634"/>
        <dbReference type="ChEBI" id="CHEBI:75989"/>
        <dbReference type="EC" id="3.5.99.6"/>
    </reaction>
</comment>
<comment type="pathway">
    <text evidence="1">Amino-sugar metabolism; N-acetylneuraminate degradation; D-fructose 6-phosphate from N-acetylneuraminate: step 5/5.</text>
</comment>
<comment type="similarity">
    <text evidence="1">Belongs to the glucosamine/galactosamine-6-phosphate isomerase family. NagB subfamily.</text>
</comment>
<gene>
    <name evidence="1" type="primary">nagB</name>
    <name type="ordered locus">Cgl2644</name>
    <name type="ordered locus">cg2928</name>
</gene>
<sequence>MDIIICKDEQEVGKAAAALIAPFATKGGTLGLATGSSPLSTYQELIRMYEAGEVSFKNCKAFLLDEYVGLTRDDENSYFKTIRKEFTDHIDIVDEEVYSPDGANPDPYEAAAEYEAKIAAESVDVQILGIGGNGHIAFNEPSSSLSGLTKVQALHPKTVEDNARFFNTIEEVPTHALTQGLGTLSRAQNIVLVATGEGKADAIRGTVEGPLTAMCPGSILQMHNNATIIVDEAAASKLENADHYRLMEQLKLR</sequence>
<reference key="1">
    <citation type="journal article" date="2003" name="Appl. Microbiol. Biotechnol.">
        <title>The Corynebacterium glutamicum genome: features and impacts on biotechnological processes.</title>
        <authorList>
            <person name="Ikeda M."/>
            <person name="Nakagawa S."/>
        </authorList>
    </citation>
    <scope>NUCLEOTIDE SEQUENCE [LARGE SCALE GENOMIC DNA]</scope>
    <source>
        <strain>ATCC 13032 / DSM 20300 / JCM 1318 / BCRC 11384 / CCUG 27702 / LMG 3730 / NBRC 12168 / NCIMB 10025 / NRRL B-2784 / 534</strain>
    </source>
</reference>
<reference key="2">
    <citation type="journal article" date="2003" name="J. Biotechnol.">
        <title>The complete Corynebacterium glutamicum ATCC 13032 genome sequence and its impact on the production of L-aspartate-derived amino acids and vitamins.</title>
        <authorList>
            <person name="Kalinowski J."/>
            <person name="Bathe B."/>
            <person name="Bartels D."/>
            <person name="Bischoff N."/>
            <person name="Bott M."/>
            <person name="Burkovski A."/>
            <person name="Dusch N."/>
            <person name="Eggeling L."/>
            <person name="Eikmanns B.J."/>
            <person name="Gaigalat L."/>
            <person name="Goesmann A."/>
            <person name="Hartmann M."/>
            <person name="Huthmacher K."/>
            <person name="Kraemer R."/>
            <person name="Linke B."/>
            <person name="McHardy A.C."/>
            <person name="Meyer F."/>
            <person name="Moeckel B."/>
            <person name="Pfefferle W."/>
            <person name="Puehler A."/>
            <person name="Rey D.A."/>
            <person name="Rueckert C."/>
            <person name="Rupp O."/>
            <person name="Sahm H."/>
            <person name="Wendisch V.F."/>
            <person name="Wiegraebe I."/>
            <person name="Tauch A."/>
        </authorList>
    </citation>
    <scope>NUCLEOTIDE SEQUENCE [LARGE SCALE GENOMIC DNA]</scope>
    <source>
        <strain>ATCC 13032 / DSM 20300 / JCM 1318 / BCRC 11384 / CCUG 27702 / LMG 3730 / NBRC 12168 / NCIMB 10025 / NRRL B-2784 / 534</strain>
    </source>
</reference>
<dbReference type="EC" id="3.5.99.6" evidence="1"/>
<dbReference type="EMBL" id="BA000036">
    <property type="protein sequence ID" value="BAC00038.1"/>
    <property type="molecule type" value="Genomic_DNA"/>
</dbReference>
<dbReference type="EMBL" id="BX927155">
    <property type="protein sequence ID" value="CAF21306.1"/>
    <property type="molecule type" value="Genomic_DNA"/>
</dbReference>
<dbReference type="RefSeq" id="NP_601844.1">
    <property type="nucleotide sequence ID" value="NC_003450.3"/>
</dbReference>
<dbReference type="RefSeq" id="WP_011015274.1">
    <property type="nucleotide sequence ID" value="NC_006958.1"/>
</dbReference>
<dbReference type="SMR" id="Q8NMD4"/>
<dbReference type="STRING" id="196627.cg2928"/>
<dbReference type="GeneID" id="1020592"/>
<dbReference type="KEGG" id="cgb:cg2928"/>
<dbReference type="KEGG" id="cgl:Cgl2644"/>
<dbReference type="PATRIC" id="fig|196627.13.peg.2580"/>
<dbReference type="eggNOG" id="COG0363">
    <property type="taxonomic scope" value="Bacteria"/>
</dbReference>
<dbReference type="HOGENOM" id="CLU_049611_1_1_11"/>
<dbReference type="OrthoDB" id="9791139at2"/>
<dbReference type="BioCyc" id="CORYNE:G18NG-12261-MONOMER"/>
<dbReference type="UniPathway" id="UPA00629">
    <property type="reaction ID" value="UER00684"/>
</dbReference>
<dbReference type="Proteomes" id="UP000000582">
    <property type="component" value="Chromosome"/>
</dbReference>
<dbReference type="Proteomes" id="UP000001009">
    <property type="component" value="Chromosome"/>
</dbReference>
<dbReference type="GO" id="GO:0005737">
    <property type="term" value="C:cytoplasm"/>
    <property type="evidence" value="ECO:0007669"/>
    <property type="project" value="TreeGrafter"/>
</dbReference>
<dbReference type="GO" id="GO:0004342">
    <property type="term" value="F:glucosamine-6-phosphate deaminase activity"/>
    <property type="evidence" value="ECO:0007669"/>
    <property type="project" value="UniProtKB-UniRule"/>
</dbReference>
<dbReference type="GO" id="GO:0042802">
    <property type="term" value="F:identical protein binding"/>
    <property type="evidence" value="ECO:0007669"/>
    <property type="project" value="TreeGrafter"/>
</dbReference>
<dbReference type="GO" id="GO:0005975">
    <property type="term" value="P:carbohydrate metabolic process"/>
    <property type="evidence" value="ECO:0007669"/>
    <property type="project" value="InterPro"/>
</dbReference>
<dbReference type="GO" id="GO:0006043">
    <property type="term" value="P:glucosamine catabolic process"/>
    <property type="evidence" value="ECO:0007669"/>
    <property type="project" value="TreeGrafter"/>
</dbReference>
<dbReference type="GO" id="GO:0006046">
    <property type="term" value="P:N-acetylglucosamine catabolic process"/>
    <property type="evidence" value="ECO:0007669"/>
    <property type="project" value="TreeGrafter"/>
</dbReference>
<dbReference type="GO" id="GO:0019262">
    <property type="term" value="P:N-acetylneuraminate catabolic process"/>
    <property type="evidence" value="ECO:0007669"/>
    <property type="project" value="UniProtKB-UniRule"/>
</dbReference>
<dbReference type="CDD" id="cd01399">
    <property type="entry name" value="GlcN6P_deaminase"/>
    <property type="match status" value="1"/>
</dbReference>
<dbReference type="Gene3D" id="3.40.50.1360">
    <property type="match status" value="1"/>
</dbReference>
<dbReference type="HAMAP" id="MF_01241">
    <property type="entry name" value="GlcN6P_deamin"/>
    <property type="match status" value="1"/>
</dbReference>
<dbReference type="InterPro" id="IPR006148">
    <property type="entry name" value="Glc/Gal-6P_isomerase"/>
</dbReference>
<dbReference type="InterPro" id="IPR004547">
    <property type="entry name" value="Glucosamine6P_isomerase"/>
</dbReference>
<dbReference type="InterPro" id="IPR037171">
    <property type="entry name" value="NagB/RpiA_transferase-like"/>
</dbReference>
<dbReference type="NCBIfam" id="TIGR00502">
    <property type="entry name" value="nagB"/>
    <property type="match status" value="1"/>
</dbReference>
<dbReference type="PANTHER" id="PTHR11280">
    <property type="entry name" value="GLUCOSAMINE-6-PHOSPHATE ISOMERASE"/>
    <property type="match status" value="1"/>
</dbReference>
<dbReference type="PANTHER" id="PTHR11280:SF5">
    <property type="entry name" value="GLUCOSAMINE-6-PHOSPHATE ISOMERASE"/>
    <property type="match status" value="1"/>
</dbReference>
<dbReference type="Pfam" id="PF01182">
    <property type="entry name" value="Glucosamine_iso"/>
    <property type="match status" value="1"/>
</dbReference>
<dbReference type="SUPFAM" id="SSF100950">
    <property type="entry name" value="NagB/RpiA/CoA transferase-like"/>
    <property type="match status" value="1"/>
</dbReference>
<proteinExistence type="inferred from homology"/>
<evidence type="ECO:0000255" key="1">
    <source>
        <dbReference type="HAMAP-Rule" id="MF_01241"/>
    </source>
</evidence>